<accession>P34291</accession>
<dbReference type="EMBL" id="Z32679">
    <property type="protein sequence ID" value="CAA83596.1"/>
    <property type="molecule type" value="Genomic_DNA"/>
</dbReference>
<dbReference type="PIR" id="C88571">
    <property type="entry name" value="C88571"/>
</dbReference>
<dbReference type="RefSeq" id="NP_001309437.1">
    <property type="nucleotide sequence ID" value="NM_001322760.1"/>
</dbReference>
<dbReference type="SMR" id="P34291"/>
<dbReference type="FunCoup" id="P34291">
    <property type="interactions" value="308"/>
</dbReference>
<dbReference type="STRING" id="6239.C05B5.3.1"/>
<dbReference type="PaxDb" id="6239-C05B5.3"/>
<dbReference type="EnsemblMetazoa" id="C05B5.3.1">
    <property type="protein sequence ID" value="C05B5.3.1"/>
    <property type="gene ID" value="WBGene00004100"/>
</dbReference>
<dbReference type="GeneID" id="176411"/>
<dbReference type="KEGG" id="cel:CELE_C05B5.3"/>
<dbReference type="UCSC" id="C05B5.3">
    <property type="organism name" value="c. elegans"/>
</dbReference>
<dbReference type="AGR" id="WB:WBGene00004100"/>
<dbReference type="CTD" id="176411"/>
<dbReference type="WormBase" id="C05B5.3">
    <property type="protein sequence ID" value="CE51442"/>
    <property type="gene ID" value="WBGene00004100"/>
    <property type="gene designation" value="pqn-8"/>
</dbReference>
<dbReference type="eggNOG" id="ENOG502TFY6">
    <property type="taxonomic scope" value="Eukaryota"/>
</dbReference>
<dbReference type="HOGENOM" id="CLU_678319_0_0_1"/>
<dbReference type="InParanoid" id="P34291"/>
<dbReference type="OMA" id="DWNFQPG"/>
<dbReference type="OrthoDB" id="5870573at2759"/>
<dbReference type="PRO" id="PR:P34291"/>
<dbReference type="Proteomes" id="UP000001940">
    <property type="component" value="Chromosome III"/>
</dbReference>
<dbReference type="Bgee" id="WBGene00004100">
    <property type="expression patterns" value="Expressed in pharyngeal muscle cell (C elegans) and 3 other cell types or tissues"/>
</dbReference>
<dbReference type="GO" id="GO:1905905">
    <property type="term" value="P:nematode pharyngeal gland morphogenesis"/>
    <property type="evidence" value="ECO:0000270"/>
    <property type="project" value="UniProtKB"/>
</dbReference>
<sequence length="401" mass="43472">MPPILLTFLLFSNVYANFMNMLMGSSSAPLQQYRAYAGCSSSGCVPATIVPKSSGFWPNADMIAGLQTEQRSQNQNQNSNNPQQDDPRTSQSTGQINGNVPGSSSSNQQPVIYIARAGSDKYKNSEVTTSTPTPNGFNFGNGFQGGQNQNTGFSSGFFNNQNQNSNQNLNQNNFQQNQNLGASSGFFNNQNQQNSQQNQVNGPTSGFSNQQTSNQNSGFFNNQNQQNGQNFGNSGNQNGVNPYSGAFSNGQNQNQQGFFGNNQNNQQNSNGQVQGSQNNQIWNQNQNPNILPFGPNLVNSNTQFGPQPFQPIQVGSIRQPFSNKDWNFQPGGQAVQFVGGGGSGGAPGSQSVPMTDEAQQIAVQIQAIRDNLSITRNESNYLINQLKLSLPQELQNQLEMV</sequence>
<feature type="chain" id="PRO_0000058560" description="Prion-like-(Q/N-rich) domain-bearing protein 8">
    <location>
        <begin position="1"/>
        <end position="401"/>
    </location>
</feature>
<feature type="region of interest" description="Disordered" evidence="1">
    <location>
        <begin position="70"/>
        <end position="109"/>
    </location>
</feature>
<feature type="region of interest" description="Disordered" evidence="1">
    <location>
        <begin position="122"/>
        <end position="303"/>
    </location>
</feature>
<feature type="compositionally biased region" description="Low complexity" evidence="1">
    <location>
        <begin position="70"/>
        <end position="84"/>
    </location>
</feature>
<feature type="compositionally biased region" description="Polar residues" evidence="1">
    <location>
        <begin position="89"/>
        <end position="109"/>
    </location>
</feature>
<feature type="compositionally biased region" description="Polar residues" evidence="1">
    <location>
        <begin position="125"/>
        <end position="134"/>
    </location>
</feature>
<feature type="compositionally biased region" description="Low complexity" evidence="1">
    <location>
        <begin position="135"/>
        <end position="181"/>
    </location>
</feature>
<feature type="compositionally biased region" description="Low complexity" evidence="1">
    <location>
        <begin position="188"/>
        <end position="239"/>
    </location>
</feature>
<feature type="compositionally biased region" description="Low complexity" evidence="1">
    <location>
        <begin position="247"/>
        <end position="289"/>
    </location>
</feature>
<keyword id="KW-1185">Reference proteome</keyword>
<comment type="tissue specificity">
    <text evidence="2">Expressed in the pharyngeal glands.</text>
</comment>
<name>PQN8_CAEEL</name>
<protein>
    <recommendedName>
        <fullName>Prion-like-(Q/N-rich) domain-bearing protein 8</fullName>
    </recommendedName>
    <alternativeName>
        <fullName>Glutamine/asparagine-rich protein pqn-8</fullName>
    </alternativeName>
</protein>
<reference key="1">
    <citation type="journal article" date="1998" name="Science">
        <title>Genome sequence of the nematode C. elegans: a platform for investigating biology.</title>
        <authorList>
            <consortium name="The C. elegans sequencing consortium"/>
        </authorList>
    </citation>
    <scope>NUCLEOTIDE SEQUENCE [LARGE SCALE GENOMIC DNA]</scope>
    <source>
        <strain>Bristol N2</strain>
    </source>
</reference>
<reference key="2">
    <citation type="journal article" date="2008" name="PLoS Genet.">
        <title>The HLH-6 transcription factor regulates C. elegans pharyngeal gland development and function.</title>
        <authorList>
            <person name="Smit R.B."/>
            <person name="Schnabel R."/>
            <person name="Gaudet J."/>
        </authorList>
    </citation>
    <scope>TISSUE SPECIFICITY</scope>
</reference>
<proteinExistence type="evidence at transcript level"/>
<gene>
    <name type="primary">pqn-8</name>
    <name type="ORF">C05B5.3</name>
</gene>
<organism>
    <name type="scientific">Caenorhabditis elegans</name>
    <dbReference type="NCBI Taxonomy" id="6239"/>
    <lineage>
        <taxon>Eukaryota</taxon>
        <taxon>Metazoa</taxon>
        <taxon>Ecdysozoa</taxon>
        <taxon>Nematoda</taxon>
        <taxon>Chromadorea</taxon>
        <taxon>Rhabditida</taxon>
        <taxon>Rhabditina</taxon>
        <taxon>Rhabditomorpha</taxon>
        <taxon>Rhabditoidea</taxon>
        <taxon>Rhabditidae</taxon>
        <taxon>Peloderinae</taxon>
        <taxon>Caenorhabditis</taxon>
    </lineage>
</organism>
<evidence type="ECO:0000256" key="1">
    <source>
        <dbReference type="SAM" id="MobiDB-lite"/>
    </source>
</evidence>
<evidence type="ECO:0000269" key="2">
    <source>
    </source>
</evidence>